<reference key="1">
    <citation type="book" date="2003" name="Advances in legume systematics - part 10">
        <title>Phylogenetic analyses of tribes Trifolieae and Vicieae based on sequences of the plastid gene matK (Papilionoideae: Leguminosae).</title>
        <editorList>
            <person name="Klitgaard B.B."/>
            <person name="Bruneau A."/>
        </editorList>
        <authorList>
            <person name="Steele K.P."/>
            <person name="Wojciechowski M.F."/>
        </authorList>
    </citation>
    <scope>NUCLEOTIDE SEQUENCE [GENOMIC DNA]</scope>
</reference>
<comment type="function">
    <text evidence="1">Usually encoded in the trnK tRNA gene intron. Probably assists in splicing its own and other chloroplast group II introns.</text>
</comment>
<comment type="subcellular location">
    <subcellularLocation>
        <location>Plastid</location>
        <location>Chloroplast</location>
    </subcellularLocation>
</comment>
<comment type="similarity">
    <text evidence="1">Belongs to the intron maturase 2 family. MatK subfamily.</text>
</comment>
<evidence type="ECO:0000255" key="1">
    <source>
        <dbReference type="HAMAP-Rule" id="MF_01390"/>
    </source>
</evidence>
<organism>
    <name type="scientific">Trifolium striatum</name>
    <name type="common">Knotted clover</name>
    <dbReference type="NCBI Taxonomy" id="97043"/>
    <lineage>
        <taxon>Eukaryota</taxon>
        <taxon>Viridiplantae</taxon>
        <taxon>Streptophyta</taxon>
        <taxon>Embryophyta</taxon>
        <taxon>Tracheophyta</taxon>
        <taxon>Spermatophyta</taxon>
        <taxon>Magnoliopsida</taxon>
        <taxon>eudicotyledons</taxon>
        <taxon>Gunneridae</taxon>
        <taxon>Pentapetalae</taxon>
        <taxon>rosids</taxon>
        <taxon>fabids</taxon>
        <taxon>Fabales</taxon>
        <taxon>Fabaceae</taxon>
        <taxon>Papilionoideae</taxon>
        <taxon>50 kb inversion clade</taxon>
        <taxon>NPAAA clade</taxon>
        <taxon>Hologalegina</taxon>
        <taxon>IRL clade</taxon>
        <taxon>Trifolieae</taxon>
        <taxon>Trifolium</taxon>
    </lineage>
</organism>
<accession>Q8MCM1</accession>
<dbReference type="EMBL" id="AF522134">
    <property type="protein sequence ID" value="AAM82126.1"/>
    <property type="molecule type" value="Genomic_DNA"/>
</dbReference>
<dbReference type="GO" id="GO:0009507">
    <property type="term" value="C:chloroplast"/>
    <property type="evidence" value="ECO:0007669"/>
    <property type="project" value="UniProtKB-SubCell"/>
</dbReference>
<dbReference type="GO" id="GO:0003723">
    <property type="term" value="F:RNA binding"/>
    <property type="evidence" value="ECO:0007669"/>
    <property type="project" value="UniProtKB-KW"/>
</dbReference>
<dbReference type="GO" id="GO:0006397">
    <property type="term" value="P:mRNA processing"/>
    <property type="evidence" value="ECO:0007669"/>
    <property type="project" value="UniProtKB-KW"/>
</dbReference>
<dbReference type="GO" id="GO:0008380">
    <property type="term" value="P:RNA splicing"/>
    <property type="evidence" value="ECO:0007669"/>
    <property type="project" value="UniProtKB-UniRule"/>
</dbReference>
<dbReference type="GO" id="GO:0008033">
    <property type="term" value="P:tRNA processing"/>
    <property type="evidence" value="ECO:0007669"/>
    <property type="project" value="UniProtKB-KW"/>
</dbReference>
<dbReference type="HAMAP" id="MF_01390">
    <property type="entry name" value="MatK"/>
    <property type="match status" value="1"/>
</dbReference>
<dbReference type="InterPro" id="IPR024937">
    <property type="entry name" value="Domain_X"/>
</dbReference>
<dbReference type="InterPro" id="IPR002866">
    <property type="entry name" value="Maturase_MatK"/>
</dbReference>
<dbReference type="InterPro" id="IPR024942">
    <property type="entry name" value="Maturase_MatK_N"/>
</dbReference>
<dbReference type="PANTHER" id="PTHR34811">
    <property type="entry name" value="MATURASE K"/>
    <property type="match status" value="1"/>
</dbReference>
<dbReference type="PANTHER" id="PTHR34811:SF1">
    <property type="entry name" value="MATURASE K"/>
    <property type="match status" value="1"/>
</dbReference>
<dbReference type="Pfam" id="PF01348">
    <property type="entry name" value="Intron_maturas2"/>
    <property type="match status" value="1"/>
</dbReference>
<dbReference type="Pfam" id="PF01824">
    <property type="entry name" value="MatK_N"/>
    <property type="match status" value="1"/>
</dbReference>
<name>MATK_TRISR</name>
<protein>
    <recommendedName>
        <fullName evidence="1">Maturase K</fullName>
    </recommendedName>
    <alternativeName>
        <fullName evidence="1">Intron maturase</fullName>
    </alternativeName>
</protein>
<proteinExistence type="inferred from homology"/>
<keyword id="KW-0150">Chloroplast</keyword>
<keyword id="KW-0507">mRNA processing</keyword>
<keyword id="KW-0934">Plastid</keyword>
<keyword id="KW-0694">RNA-binding</keyword>
<keyword id="KW-0819">tRNA processing</keyword>
<gene>
    <name evidence="1" type="primary">matK</name>
</gene>
<feature type="chain" id="PRO_0000143755" description="Maturase K">
    <location>
        <begin position="1"/>
        <end position="506"/>
    </location>
</feature>
<sequence length="506" mass="61025">MKEYQVYLERARSRQQDFLYPLIFREYIYGLAYSHNWSRSIFVENGGYDNKYSLLNVKRLITRMYQQNHLIISANDSPKNPFWGYNKNFDSQIISEGFAIVVEIPFFLQLNSSLKEAEIIKSYKNVRSIHSIFPFLEDKFTYLHYVSDIRIPYPIHLEILVQILRYWVKDAPFFHLLRLFLYHFSNWNRFITTKKSISTFSKRNPRLFLFLYNFYVCEYESIFLFLRNKSSHLRLKSFSVFLERIFFYAKREHLVEVFAKDFSYPLPFFKDPNIHYVRYQGKCILASKNVPFLMNKWKHYFIHLWQCFFDVWSQPRTININQLSEHSFQLLGYFSNVQLNRSVVRSQMLQNTFLIEIVSKKLDIIVPIIPLIRSLAKAKFCNVLGHPISKPVWADSSDFDIIERFLRICRNLSHYYNGSSKKKSLYRIKYILRLSCIKTLACKHKSTVRAFLKRSGSEELLEEFFTEEEEILSLIFPRDSFTLHRFYRNRIWYLDILFSNDLVNDE</sequence>
<geneLocation type="chloroplast"/>